<dbReference type="EC" id="2.7.4.14" evidence="2"/>
<dbReference type="EMBL" id="Z69302">
    <property type="protein sequence ID" value="CAA93264.1"/>
    <property type="molecule type" value="Genomic_DNA"/>
</dbReference>
<dbReference type="PIR" id="T22036">
    <property type="entry name" value="T22036"/>
</dbReference>
<dbReference type="RefSeq" id="NP_001366761.1">
    <property type="nucleotide sequence ID" value="NM_001381589.2"/>
</dbReference>
<dbReference type="RefSeq" id="NP_496386.1">
    <property type="nucleotide sequence ID" value="NM_063985.5"/>
</dbReference>
<dbReference type="SMR" id="Q20230"/>
<dbReference type="BioGRID" id="40011">
    <property type="interactions" value="7"/>
</dbReference>
<dbReference type="FunCoup" id="Q20230">
    <property type="interactions" value="2258"/>
</dbReference>
<dbReference type="STRING" id="6239.F40F8.1b.1"/>
<dbReference type="PaxDb" id="6239-F40F8.1.1"/>
<dbReference type="PeptideAtlas" id="Q20230"/>
<dbReference type="EnsemblMetazoa" id="F40F8.1a.1">
    <property type="protein sequence ID" value="F40F8.1a.1"/>
    <property type="gene ID" value="WBGene00009575"/>
</dbReference>
<dbReference type="GeneID" id="174701"/>
<dbReference type="UCSC" id="F40F8.1.1">
    <property type="organism name" value="c. elegans"/>
</dbReference>
<dbReference type="AGR" id="WB:WBGene00009575"/>
<dbReference type="WormBase" id="F40F8.1a">
    <property type="protein sequence ID" value="CE05842"/>
    <property type="gene ID" value="WBGene00009575"/>
</dbReference>
<dbReference type="eggNOG" id="KOG3079">
    <property type="taxonomic scope" value="Eukaryota"/>
</dbReference>
<dbReference type="GeneTree" id="ENSGT00940000163540"/>
<dbReference type="HOGENOM" id="CLU_032354_0_2_1"/>
<dbReference type="InParanoid" id="Q20230"/>
<dbReference type="PhylomeDB" id="Q20230"/>
<dbReference type="Reactome" id="R-CEL-499943">
    <property type="pathway name" value="Interconversion of nucleotide di- and triphosphates"/>
</dbReference>
<dbReference type="PRO" id="PR:Q20230"/>
<dbReference type="Proteomes" id="UP000001940">
    <property type="component" value="Chromosome II"/>
</dbReference>
<dbReference type="Bgee" id="WBGene00009575">
    <property type="expression patterns" value="Expressed in adult organism and 4 other cell types or tissues"/>
</dbReference>
<dbReference type="ExpressionAtlas" id="Q20230">
    <property type="expression patterns" value="baseline and differential"/>
</dbReference>
<dbReference type="GO" id="GO:0005737">
    <property type="term" value="C:cytoplasm"/>
    <property type="evidence" value="ECO:0000318"/>
    <property type="project" value="GO_Central"/>
</dbReference>
<dbReference type="GO" id="GO:0005634">
    <property type="term" value="C:nucleus"/>
    <property type="evidence" value="ECO:0000318"/>
    <property type="project" value="GO_Central"/>
</dbReference>
<dbReference type="GO" id="GO:0004127">
    <property type="term" value="F:(d)CMP kinase activity"/>
    <property type="evidence" value="ECO:0000318"/>
    <property type="project" value="GO_Central"/>
</dbReference>
<dbReference type="GO" id="GO:0005524">
    <property type="term" value="F:ATP binding"/>
    <property type="evidence" value="ECO:0007669"/>
    <property type="project" value="UniProtKB-KW"/>
</dbReference>
<dbReference type="GO" id="GO:0036430">
    <property type="term" value="F:CMP kinase activity"/>
    <property type="evidence" value="ECO:0007669"/>
    <property type="project" value="RHEA"/>
</dbReference>
<dbReference type="GO" id="GO:0036431">
    <property type="term" value="F:dCMP kinase activity"/>
    <property type="evidence" value="ECO:0007669"/>
    <property type="project" value="RHEA"/>
</dbReference>
<dbReference type="GO" id="GO:0033862">
    <property type="term" value="F:UMP kinase activity"/>
    <property type="evidence" value="ECO:0000314"/>
    <property type="project" value="WormBase"/>
</dbReference>
<dbReference type="GO" id="GO:0006207">
    <property type="term" value="P:'de novo' pyrimidine nucleobase biosynthetic process"/>
    <property type="evidence" value="ECO:0007669"/>
    <property type="project" value="InterPro"/>
</dbReference>
<dbReference type="GO" id="GO:0046705">
    <property type="term" value="P:CDP biosynthetic process"/>
    <property type="evidence" value="ECO:0000318"/>
    <property type="project" value="GO_Central"/>
</dbReference>
<dbReference type="GO" id="GO:0006225">
    <property type="term" value="P:UDP biosynthetic process"/>
    <property type="evidence" value="ECO:0000314"/>
    <property type="project" value="WormBase"/>
</dbReference>
<dbReference type="CDD" id="cd01428">
    <property type="entry name" value="ADK"/>
    <property type="match status" value="1"/>
</dbReference>
<dbReference type="FunFam" id="3.40.50.300:FF:000315">
    <property type="entry name" value="Adenylate kinase 1"/>
    <property type="match status" value="1"/>
</dbReference>
<dbReference type="Gene3D" id="3.40.50.300">
    <property type="entry name" value="P-loop containing nucleotide triphosphate hydrolases"/>
    <property type="match status" value="1"/>
</dbReference>
<dbReference type="HAMAP" id="MF_00235">
    <property type="entry name" value="Adenylate_kinase_Adk"/>
    <property type="match status" value="1"/>
</dbReference>
<dbReference type="HAMAP" id="MF_03172">
    <property type="entry name" value="Adenylate_kinase_UMP_CMP_kin"/>
    <property type="match status" value="1"/>
</dbReference>
<dbReference type="InterPro" id="IPR000850">
    <property type="entry name" value="Adenylat/UMP-CMP_kin"/>
</dbReference>
<dbReference type="InterPro" id="IPR033690">
    <property type="entry name" value="Adenylat_kinase_CS"/>
</dbReference>
<dbReference type="InterPro" id="IPR027417">
    <property type="entry name" value="P-loop_NTPase"/>
</dbReference>
<dbReference type="InterPro" id="IPR006266">
    <property type="entry name" value="UMP_CMP_kinase"/>
</dbReference>
<dbReference type="NCBIfam" id="TIGR01359">
    <property type="entry name" value="UMP_CMP_kin_fam"/>
    <property type="match status" value="1"/>
</dbReference>
<dbReference type="PANTHER" id="PTHR23359">
    <property type="entry name" value="NUCLEOTIDE KINASE"/>
    <property type="match status" value="1"/>
</dbReference>
<dbReference type="Pfam" id="PF00406">
    <property type="entry name" value="ADK"/>
    <property type="match status" value="1"/>
</dbReference>
<dbReference type="PRINTS" id="PR00094">
    <property type="entry name" value="ADENYLTKNASE"/>
</dbReference>
<dbReference type="SUPFAM" id="SSF52540">
    <property type="entry name" value="P-loop containing nucleoside triphosphate hydrolases"/>
    <property type="match status" value="1"/>
</dbReference>
<dbReference type="PROSITE" id="PS00113">
    <property type="entry name" value="ADENYLATE_KINASE"/>
    <property type="match status" value="1"/>
</dbReference>
<name>KCY2_CAEEL</name>
<gene>
    <name type="ORF">F40F8.1</name>
</gene>
<comment type="function">
    <text evidence="2 3">Catalyzes the phosphorylation of pyrimidine nucleoside monophosphates at the expense of ATP. Plays an important role in de novo pyrimidine nucleotide biosynthesis. Has preference for UMP and CMP as phosphate acceptors.</text>
</comment>
<comment type="catalytic activity">
    <reaction evidence="2 3">
        <text>CMP + ATP = CDP + ADP</text>
        <dbReference type="Rhea" id="RHEA:11600"/>
        <dbReference type="ChEBI" id="CHEBI:30616"/>
        <dbReference type="ChEBI" id="CHEBI:58069"/>
        <dbReference type="ChEBI" id="CHEBI:60377"/>
        <dbReference type="ChEBI" id="CHEBI:456216"/>
        <dbReference type="EC" id="2.7.4.14"/>
    </reaction>
</comment>
<comment type="catalytic activity">
    <reaction evidence="2 3">
        <text>dCMP + ATP = dCDP + ADP</text>
        <dbReference type="Rhea" id="RHEA:25094"/>
        <dbReference type="ChEBI" id="CHEBI:30616"/>
        <dbReference type="ChEBI" id="CHEBI:57566"/>
        <dbReference type="ChEBI" id="CHEBI:58593"/>
        <dbReference type="ChEBI" id="CHEBI:456216"/>
        <dbReference type="EC" id="2.7.4.14"/>
    </reaction>
</comment>
<comment type="catalytic activity">
    <reaction evidence="2 3">
        <text>UMP + ATP = UDP + ADP</text>
        <dbReference type="Rhea" id="RHEA:24400"/>
        <dbReference type="ChEBI" id="CHEBI:30616"/>
        <dbReference type="ChEBI" id="CHEBI:57865"/>
        <dbReference type="ChEBI" id="CHEBI:58223"/>
        <dbReference type="ChEBI" id="CHEBI:456216"/>
        <dbReference type="EC" id="2.7.4.14"/>
    </reaction>
</comment>
<comment type="cofactor">
    <cofactor evidence="2">
        <name>Mg(2+)</name>
        <dbReference type="ChEBI" id="CHEBI:18420"/>
    </cofactor>
    <text evidence="2">Binds 1 Mg(2+) ion per monomer.</text>
</comment>
<comment type="subunit">
    <text evidence="2">Monomer.</text>
</comment>
<comment type="subcellular location">
    <subcellularLocation>
        <location evidence="2">Cytoplasm</location>
    </subcellularLocation>
    <subcellularLocation>
        <location evidence="2">Nucleus</location>
    </subcellularLocation>
</comment>
<comment type="tissue specificity">
    <text evidence="3">Expressed in neurons and the pharynx.</text>
</comment>
<comment type="domain">
    <text evidence="1">Consists of three domains, a large central CORE domain and two small peripheral domains, NMPbind and LID, which undergo movements during catalysis. The LID domain closes over the site of phosphoryl transfer upon ATP binding. Assembling and disassembling the active center during each catalytic cycle provides an effective means to prevent ATP hydrolysis (By similarity).</text>
</comment>
<comment type="disruption phenotype">
    <text evidence="3">In contrast to its homolog C29F7.3, does not confer resistance to 5-fluorouracil.</text>
</comment>
<comment type="similarity">
    <text evidence="2">Belongs to the adenylate kinase family. UMP-CMP kinase subfamily.</text>
</comment>
<reference key="1">
    <citation type="journal article" date="1998" name="Science">
        <title>Genome sequence of the nematode C. elegans: a platform for investigating biology.</title>
        <authorList>
            <consortium name="The C. elegans sequencing consortium"/>
        </authorList>
    </citation>
    <scope>NUCLEOTIDE SEQUENCE [LARGE SCALE GENOMIC DNA]</scope>
    <source>
        <strain>Bristol N2</strain>
    </source>
</reference>
<reference key="2">
    <citation type="journal article" date="2009" name="FEBS J.">
        <title>Functional analysis of pyrimidine biosynthesis enzymes using the anticancer drug 5-fluorouracil in Caenorhabditis elegans.</title>
        <authorList>
            <person name="Kim S."/>
            <person name="Park D.H."/>
            <person name="Kim T.H."/>
            <person name="Hwang M."/>
            <person name="Shim J."/>
        </authorList>
    </citation>
    <scope>FUNCTION</scope>
    <scope>CATALYTIC ACTIVITY</scope>
    <scope>DISRUPTION PHENOTYPE</scope>
    <scope>TISSUE SPECIFICITY</scope>
</reference>
<proteinExistence type="evidence at protein level"/>
<feature type="chain" id="PRO_0000422253" description="UMP-CMP kinase 2">
    <location>
        <begin position="1"/>
        <end position="191"/>
    </location>
</feature>
<feature type="region of interest" description="NMP" evidence="2">
    <location>
        <begin position="32"/>
        <end position="62"/>
    </location>
</feature>
<feature type="region of interest" description="LID" evidence="2">
    <location>
        <begin position="128"/>
        <end position="136"/>
    </location>
</feature>
<feature type="binding site" evidence="2">
    <location>
        <begin position="12"/>
        <end position="17"/>
    </location>
    <ligand>
        <name>ATP</name>
        <dbReference type="ChEBI" id="CHEBI:30616"/>
    </ligand>
</feature>
<feature type="binding site" evidence="2">
    <location>
        <position position="38"/>
    </location>
    <ligand>
        <name>a ribonucleoside 5'-phosphate</name>
        <dbReference type="ChEBI" id="CHEBI:58043"/>
    </ligand>
</feature>
<feature type="binding site" evidence="2">
    <location>
        <begin position="60"/>
        <end position="62"/>
    </location>
    <ligand>
        <name>a ribonucleoside 5'-phosphate</name>
        <dbReference type="ChEBI" id="CHEBI:58043"/>
    </ligand>
</feature>
<feature type="binding site" evidence="2">
    <location>
        <begin position="88"/>
        <end position="91"/>
    </location>
    <ligand>
        <name>a ribonucleoside 5'-phosphate</name>
        <dbReference type="ChEBI" id="CHEBI:58043"/>
    </ligand>
</feature>
<feature type="binding site" evidence="2">
    <location>
        <position position="95"/>
    </location>
    <ligand>
        <name>CMP</name>
        <dbReference type="ChEBI" id="CHEBI:60377"/>
    </ligand>
</feature>
<feature type="binding site" evidence="2">
    <location>
        <position position="129"/>
    </location>
    <ligand>
        <name>ATP</name>
        <dbReference type="ChEBI" id="CHEBI:30616"/>
    </ligand>
</feature>
<feature type="binding site" evidence="2">
    <location>
        <position position="133"/>
    </location>
    <ligand>
        <name>a ribonucleoside 5'-phosphate</name>
        <dbReference type="ChEBI" id="CHEBI:58043"/>
    </ligand>
</feature>
<feature type="binding site" evidence="2">
    <location>
        <position position="144"/>
    </location>
    <ligand>
        <name>a ribonucleoside 5'-phosphate</name>
        <dbReference type="ChEBI" id="CHEBI:58043"/>
    </ligand>
</feature>
<feature type="binding site" evidence="2">
    <location>
        <position position="172"/>
    </location>
    <ligand>
        <name>ATP</name>
        <dbReference type="ChEBI" id="CHEBI:30616"/>
    </ligand>
</feature>
<evidence type="ECO:0000250" key="1"/>
<evidence type="ECO:0000255" key="2">
    <source>
        <dbReference type="HAMAP-Rule" id="MF_03172"/>
    </source>
</evidence>
<evidence type="ECO:0000269" key="3">
    <source>
    </source>
</evidence>
<accession>Q20230</accession>
<sequence>MHNVVFVLGPPGSGKGTICAKIQENLNYVHLSAGDLLRAERQREGSEFGALIESHIKNGSIVPVEITCSLLENAMKACGDAKGFLVDGFPRNEDNLQGWNKQMDGKALVQFVLFLSCPVSICIERCLNRGQGRTDDNEESLKKRVETYNQQTFPIIEHFEKSGLVREVKSERPVDVVYADVEKVFDAANKK</sequence>
<organism>
    <name type="scientific">Caenorhabditis elegans</name>
    <dbReference type="NCBI Taxonomy" id="6239"/>
    <lineage>
        <taxon>Eukaryota</taxon>
        <taxon>Metazoa</taxon>
        <taxon>Ecdysozoa</taxon>
        <taxon>Nematoda</taxon>
        <taxon>Chromadorea</taxon>
        <taxon>Rhabditida</taxon>
        <taxon>Rhabditina</taxon>
        <taxon>Rhabditomorpha</taxon>
        <taxon>Rhabditoidea</taxon>
        <taxon>Rhabditidae</taxon>
        <taxon>Peloderinae</taxon>
        <taxon>Caenorhabditis</taxon>
    </lineage>
</organism>
<protein>
    <recommendedName>
        <fullName evidence="2">UMP-CMP kinase 2</fullName>
        <ecNumber evidence="2">2.7.4.14</ecNumber>
    </recommendedName>
    <alternativeName>
        <fullName evidence="2">Deoxycytidylate kinase 2</fullName>
        <shortName evidence="2">CK 2</shortName>
        <shortName evidence="2">dCMP kinase 2</shortName>
    </alternativeName>
    <alternativeName>
        <fullName evidence="2">Uridine monophosphate/cytidine monophosphate kinase 2</fullName>
        <shortName evidence="2">UMP/CMP kinase 2</shortName>
        <shortName evidence="2">UMP/CMPK 2</shortName>
    </alternativeName>
</protein>
<keyword id="KW-0067">ATP-binding</keyword>
<keyword id="KW-0963">Cytoplasm</keyword>
<keyword id="KW-0418">Kinase</keyword>
<keyword id="KW-0547">Nucleotide-binding</keyword>
<keyword id="KW-0539">Nucleus</keyword>
<keyword id="KW-0665">Pyrimidine biosynthesis</keyword>
<keyword id="KW-1185">Reference proteome</keyword>
<keyword id="KW-0808">Transferase</keyword>